<keyword id="KW-0067">ATP-binding</keyword>
<keyword id="KW-0997">Cell inner membrane</keyword>
<keyword id="KW-1003">Cell membrane</keyword>
<keyword id="KW-0378">Hydrolase</keyword>
<keyword id="KW-0472">Membrane</keyword>
<keyword id="KW-0479">Metal-binding</keyword>
<keyword id="KW-0482">Metalloprotease</keyword>
<keyword id="KW-0547">Nucleotide-binding</keyword>
<keyword id="KW-0645">Protease</keyword>
<keyword id="KW-1185">Reference proteome</keyword>
<keyword id="KW-0812">Transmembrane</keyword>
<keyword id="KW-1133">Transmembrane helix</keyword>
<keyword id="KW-0862">Zinc</keyword>
<feature type="chain" id="PRO_0000400406" description="ATP-dependent zinc metalloprotease FtsH">
    <location>
        <begin position="1"/>
        <end position="736"/>
    </location>
</feature>
<feature type="topological domain" description="Cytoplasmic" evidence="1">
    <location>
        <begin position="1"/>
        <end position="87"/>
    </location>
</feature>
<feature type="transmembrane region" description="Helical" evidence="1">
    <location>
        <begin position="88"/>
        <end position="108"/>
    </location>
</feature>
<feature type="topological domain" description="Periplasmic" evidence="1">
    <location>
        <begin position="109"/>
        <end position="205"/>
    </location>
</feature>
<feature type="transmembrane region" description="Helical" evidence="1">
    <location>
        <begin position="206"/>
        <end position="226"/>
    </location>
</feature>
<feature type="topological domain" description="Cytoplasmic" evidence="1">
    <location>
        <begin position="227"/>
        <end position="736"/>
    </location>
</feature>
<feature type="region of interest" description="Disordered" evidence="2">
    <location>
        <begin position="1"/>
        <end position="39"/>
    </location>
</feature>
<feature type="region of interest" description="Disordered" evidence="2">
    <location>
        <begin position="57"/>
        <end position="83"/>
    </location>
</feature>
<feature type="region of interest" description="Disordered" evidence="2">
    <location>
        <begin position="706"/>
        <end position="736"/>
    </location>
</feature>
<feature type="compositionally biased region" description="Polar residues" evidence="2">
    <location>
        <begin position="57"/>
        <end position="73"/>
    </location>
</feature>
<feature type="active site" evidence="1">
    <location>
        <position position="523"/>
    </location>
</feature>
<feature type="binding site" evidence="1">
    <location>
        <begin position="301"/>
        <end position="308"/>
    </location>
    <ligand>
        <name>ATP</name>
        <dbReference type="ChEBI" id="CHEBI:30616"/>
    </ligand>
</feature>
<feature type="binding site" evidence="1">
    <location>
        <position position="522"/>
    </location>
    <ligand>
        <name>Zn(2+)</name>
        <dbReference type="ChEBI" id="CHEBI:29105"/>
        <note>catalytic</note>
    </ligand>
</feature>
<feature type="binding site" evidence="1">
    <location>
        <position position="526"/>
    </location>
    <ligand>
        <name>Zn(2+)</name>
        <dbReference type="ChEBI" id="CHEBI:29105"/>
        <note>catalytic</note>
    </ligand>
</feature>
<feature type="binding site" evidence="1">
    <location>
        <position position="598"/>
    </location>
    <ligand>
        <name>Zn(2+)</name>
        <dbReference type="ChEBI" id="CHEBI:29105"/>
        <note>catalytic</note>
    </ligand>
</feature>
<reference key="1">
    <citation type="journal article" date="2007" name="Proc. Natl. Acad. Sci. U.S.A.">
        <title>The genome of Syntrophus aciditrophicus: life at the thermodynamic limit of microbial growth.</title>
        <authorList>
            <person name="McInerney M.J."/>
            <person name="Rohlin L."/>
            <person name="Mouttaki H."/>
            <person name="Kim U."/>
            <person name="Krupp R.S."/>
            <person name="Rios-Hernandez L."/>
            <person name="Sieber J."/>
            <person name="Struchtemeyer C.G."/>
            <person name="Bhattacharyya A."/>
            <person name="Campbell J.W."/>
            <person name="Gunsalus R.P."/>
        </authorList>
    </citation>
    <scope>NUCLEOTIDE SEQUENCE [LARGE SCALE GENOMIC DNA]</scope>
    <source>
        <strain>SB</strain>
    </source>
</reference>
<protein>
    <recommendedName>
        <fullName evidence="1">ATP-dependent zinc metalloprotease FtsH</fullName>
        <ecNumber evidence="1">3.4.24.-</ecNumber>
    </recommendedName>
</protein>
<evidence type="ECO:0000255" key="1">
    <source>
        <dbReference type="HAMAP-Rule" id="MF_01458"/>
    </source>
</evidence>
<evidence type="ECO:0000256" key="2">
    <source>
        <dbReference type="SAM" id="MobiDB-lite"/>
    </source>
</evidence>
<accession>Q2LUQ1</accession>
<dbReference type="EC" id="3.4.24.-" evidence="1"/>
<dbReference type="EMBL" id="CP000252">
    <property type="protein sequence ID" value="ABC77815.1"/>
    <property type="molecule type" value="Genomic_DNA"/>
</dbReference>
<dbReference type="SMR" id="Q2LUQ1"/>
<dbReference type="STRING" id="56780.SYN_03643"/>
<dbReference type="KEGG" id="sat:SYN_03643"/>
<dbReference type="eggNOG" id="COG0465">
    <property type="taxonomic scope" value="Bacteria"/>
</dbReference>
<dbReference type="HOGENOM" id="CLU_000688_23_3_7"/>
<dbReference type="InParanoid" id="Q2LUQ1"/>
<dbReference type="Proteomes" id="UP000001933">
    <property type="component" value="Chromosome"/>
</dbReference>
<dbReference type="GO" id="GO:0005886">
    <property type="term" value="C:plasma membrane"/>
    <property type="evidence" value="ECO:0007669"/>
    <property type="project" value="UniProtKB-SubCell"/>
</dbReference>
<dbReference type="GO" id="GO:0005524">
    <property type="term" value="F:ATP binding"/>
    <property type="evidence" value="ECO:0007669"/>
    <property type="project" value="UniProtKB-UniRule"/>
</dbReference>
<dbReference type="GO" id="GO:0016887">
    <property type="term" value="F:ATP hydrolysis activity"/>
    <property type="evidence" value="ECO:0007669"/>
    <property type="project" value="UniProtKB-UniRule"/>
</dbReference>
<dbReference type="GO" id="GO:0004176">
    <property type="term" value="F:ATP-dependent peptidase activity"/>
    <property type="evidence" value="ECO:0007669"/>
    <property type="project" value="InterPro"/>
</dbReference>
<dbReference type="GO" id="GO:0004222">
    <property type="term" value="F:metalloendopeptidase activity"/>
    <property type="evidence" value="ECO:0007669"/>
    <property type="project" value="InterPro"/>
</dbReference>
<dbReference type="GO" id="GO:0008270">
    <property type="term" value="F:zinc ion binding"/>
    <property type="evidence" value="ECO:0007669"/>
    <property type="project" value="UniProtKB-UniRule"/>
</dbReference>
<dbReference type="GO" id="GO:0030163">
    <property type="term" value="P:protein catabolic process"/>
    <property type="evidence" value="ECO:0007669"/>
    <property type="project" value="UniProtKB-UniRule"/>
</dbReference>
<dbReference type="GO" id="GO:0006508">
    <property type="term" value="P:proteolysis"/>
    <property type="evidence" value="ECO:0007669"/>
    <property type="project" value="UniProtKB-KW"/>
</dbReference>
<dbReference type="CDD" id="cd19501">
    <property type="entry name" value="RecA-like_FtsH"/>
    <property type="match status" value="1"/>
</dbReference>
<dbReference type="FunFam" id="1.10.8.60:FF:000001">
    <property type="entry name" value="ATP-dependent zinc metalloprotease FtsH"/>
    <property type="match status" value="1"/>
</dbReference>
<dbReference type="FunFam" id="1.20.58.760:FF:000001">
    <property type="entry name" value="ATP-dependent zinc metalloprotease FtsH"/>
    <property type="match status" value="1"/>
</dbReference>
<dbReference type="FunFam" id="3.40.50.300:FF:000001">
    <property type="entry name" value="ATP-dependent zinc metalloprotease FtsH"/>
    <property type="match status" value="1"/>
</dbReference>
<dbReference type="Gene3D" id="1.10.8.60">
    <property type="match status" value="1"/>
</dbReference>
<dbReference type="Gene3D" id="3.30.720.210">
    <property type="match status" value="1"/>
</dbReference>
<dbReference type="Gene3D" id="3.40.50.300">
    <property type="entry name" value="P-loop containing nucleotide triphosphate hydrolases"/>
    <property type="match status" value="1"/>
</dbReference>
<dbReference type="Gene3D" id="1.20.58.760">
    <property type="entry name" value="Peptidase M41"/>
    <property type="match status" value="1"/>
</dbReference>
<dbReference type="HAMAP" id="MF_01458">
    <property type="entry name" value="FtsH"/>
    <property type="match status" value="1"/>
</dbReference>
<dbReference type="InterPro" id="IPR003593">
    <property type="entry name" value="AAA+_ATPase"/>
</dbReference>
<dbReference type="InterPro" id="IPR041569">
    <property type="entry name" value="AAA_lid_3"/>
</dbReference>
<dbReference type="InterPro" id="IPR003959">
    <property type="entry name" value="ATPase_AAA_core"/>
</dbReference>
<dbReference type="InterPro" id="IPR003960">
    <property type="entry name" value="ATPase_AAA_CS"/>
</dbReference>
<dbReference type="InterPro" id="IPR005936">
    <property type="entry name" value="FtsH"/>
</dbReference>
<dbReference type="InterPro" id="IPR027417">
    <property type="entry name" value="P-loop_NTPase"/>
</dbReference>
<dbReference type="InterPro" id="IPR011546">
    <property type="entry name" value="Pept_M41_FtsH_extracell"/>
</dbReference>
<dbReference type="InterPro" id="IPR000642">
    <property type="entry name" value="Peptidase_M41"/>
</dbReference>
<dbReference type="InterPro" id="IPR037219">
    <property type="entry name" value="Peptidase_M41-like"/>
</dbReference>
<dbReference type="NCBIfam" id="TIGR01241">
    <property type="entry name" value="FtsH_fam"/>
    <property type="match status" value="1"/>
</dbReference>
<dbReference type="PANTHER" id="PTHR23076:SF97">
    <property type="entry name" value="ATP-DEPENDENT ZINC METALLOPROTEASE YME1L1"/>
    <property type="match status" value="1"/>
</dbReference>
<dbReference type="PANTHER" id="PTHR23076">
    <property type="entry name" value="METALLOPROTEASE M41 FTSH"/>
    <property type="match status" value="1"/>
</dbReference>
<dbReference type="Pfam" id="PF00004">
    <property type="entry name" value="AAA"/>
    <property type="match status" value="1"/>
</dbReference>
<dbReference type="Pfam" id="PF17862">
    <property type="entry name" value="AAA_lid_3"/>
    <property type="match status" value="1"/>
</dbReference>
<dbReference type="Pfam" id="PF06480">
    <property type="entry name" value="FtsH_ext"/>
    <property type="match status" value="1"/>
</dbReference>
<dbReference type="Pfam" id="PF01434">
    <property type="entry name" value="Peptidase_M41"/>
    <property type="match status" value="1"/>
</dbReference>
<dbReference type="SMART" id="SM00382">
    <property type="entry name" value="AAA"/>
    <property type="match status" value="1"/>
</dbReference>
<dbReference type="SUPFAM" id="SSF140990">
    <property type="entry name" value="FtsH protease domain-like"/>
    <property type="match status" value="1"/>
</dbReference>
<dbReference type="SUPFAM" id="SSF52540">
    <property type="entry name" value="P-loop containing nucleoside triphosphate hydrolases"/>
    <property type="match status" value="1"/>
</dbReference>
<dbReference type="PROSITE" id="PS00674">
    <property type="entry name" value="AAA"/>
    <property type="match status" value="1"/>
</dbReference>
<name>FTSH_SYNAS</name>
<organism>
    <name type="scientific">Syntrophus aciditrophicus (strain SB)</name>
    <dbReference type="NCBI Taxonomy" id="56780"/>
    <lineage>
        <taxon>Bacteria</taxon>
        <taxon>Pseudomonadati</taxon>
        <taxon>Thermodesulfobacteriota</taxon>
        <taxon>Syntrophia</taxon>
        <taxon>Syntrophales</taxon>
        <taxon>Syntrophaceae</taxon>
        <taxon>Syntrophus</taxon>
    </lineage>
</organism>
<proteinExistence type="inferred from homology"/>
<sequence>MDSNVDSQRVPDGQIFFRPVHPGISGKDMESGTSDGQQRKMMEFEISEEADMRLTRQQTQNRTGFASADTKQGSPEGADRKKMPPGKAWLWFVLILIVNFLMVRLLIPDAEQPVMVPYTLFKGEVGKGNVKEIFSRGDTITGRFKEEIAYQAAEEKAGDSRKASKAVTTFTTTVPSFVDPGLEAFLISNGVEISAKPIHEERSPWATIVYSFGPGLLFIAFYIWLFRRMAQQGGLGGGIMGIGKSKARRYDQEEGRKVTFDDVAGIDEAENELVEIVDFLKDPPKYTRLGGTAPKGVLLVGAPGTGKTLLAKAVAGEAGVPFFSMSAAEFVEMIVGVGAARVRDLFKQAREHAPAIIFIDELDAIGRARGQVAIGGASEQEQTLNQILTEMDGFSSREGIIVLAATNQPDVLDKALLRPGRFDRRVVVNLPDKVGREAILKVHTRSVPLAKDASLGELAAATPGFSGADLRNLVNEAALMAARRDQDDVRARDFLDALEKIVLGPERPLLLSHADKERIAYHEGGHAILGLVAHGADRVHRVTIVPRGQALGVTYQRPDSDRYNYTEAYLRAKIVGMLGGRAAEEIVYGTRTTGAESDIEQATGLAHRMVTRWGMSERLGLIQLAPRENPYLGGPAGYGSARPFSDGTAEAIDAEVIRIIAESHEEAKRLLRAYRKQLDVLAEALVAQETLDEQEILRITGLPPAPALDAGKLPVPDGGDKNAEPSVSLPGVAGPS</sequence>
<gene>
    <name evidence="1" type="primary">ftsH</name>
    <name type="ordered locus">SYNAS_19360</name>
    <name type="ORF">SYN_03643</name>
</gene>
<comment type="function">
    <text evidence="1">Acts as a processive, ATP-dependent zinc metallopeptidase for both cytoplasmic and membrane proteins. Plays a role in the quality control of integral membrane proteins.</text>
</comment>
<comment type="cofactor">
    <cofactor evidence="1">
        <name>Zn(2+)</name>
        <dbReference type="ChEBI" id="CHEBI:29105"/>
    </cofactor>
    <text evidence="1">Binds 1 zinc ion per subunit.</text>
</comment>
<comment type="subunit">
    <text evidence="1">Homohexamer.</text>
</comment>
<comment type="subcellular location">
    <subcellularLocation>
        <location evidence="1">Cell inner membrane</location>
        <topology evidence="1">Multi-pass membrane protein</topology>
        <orientation evidence="1">Cytoplasmic side</orientation>
    </subcellularLocation>
</comment>
<comment type="similarity">
    <text evidence="1">In the central section; belongs to the AAA ATPase family.</text>
</comment>
<comment type="similarity">
    <text evidence="1">In the C-terminal section; belongs to the peptidase M41 family.</text>
</comment>